<sequence>MRHTLPIAPQFYVTAPQSCPYLEGRLERKLFTALQGEHAQKLNDTLSKQGFRRSQNVLYRPSCAECSACLSARIRVADFEPTRTQRRVMKRNADLRRNATSPWATEDQYALFRRYLDDRHADGGMADMDIFEFAAMIEETPIRSRVIEYSRPGDTPSNRPLSAVCLTDIFDDGLSMVYSFYDPDLAGRSLGAYVILDHIEIAREAGLPYVYLGYWVPGSRKMGYKATYSALEIYKGGRWQAIGQPSDHRAELHPLSVDPIAEQVARISLPEARSGDRSRD</sequence>
<feature type="chain" id="PRO_0000263209" description="Aspartate/glutamate leucyltransferase">
    <location>
        <begin position="1"/>
        <end position="280"/>
    </location>
</feature>
<dbReference type="EC" id="2.3.2.29" evidence="1"/>
<dbReference type="EMBL" id="CP000143">
    <property type="protein sequence ID" value="ABA78794.1"/>
    <property type="molecule type" value="Genomic_DNA"/>
</dbReference>
<dbReference type="RefSeq" id="WP_011337625.1">
    <property type="nucleotide sequence ID" value="NC_007493.2"/>
</dbReference>
<dbReference type="RefSeq" id="YP_352695.1">
    <property type="nucleotide sequence ID" value="NC_007493.2"/>
</dbReference>
<dbReference type="SMR" id="Q3J340"/>
<dbReference type="STRING" id="272943.RSP_2639"/>
<dbReference type="EnsemblBacteria" id="ABA78794">
    <property type="protein sequence ID" value="ABA78794"/>
    <property type="gene ID" value="RSP_2639"/>
</dbReference>
<dbReference type="GeneID" id="3720329"/>
<dbReference type="KEGG" id="rsp:RSP_2639"/>
<dbReference type="PATRIC" id="fig|272943.9.peg.1557"/>
<dbReference type="eggNOG" id="COG2935">
    <property type="taxonomic scope" value="Bacteria"/>
</dbReference>
<dbReference type="OrthoDB" id="9782022at2"/>
<dbReference type="PhylomeDB" id="Q3J340"/>
<dbReference type="Proteomes" id="UP000002703">
    <property type="component" value="Chromosome 1"/>
</dbReference>
<dbReference type="GO" id="GO:0005737">
    <property type="term" value="C:cytoplasm"/>
    <property type="evidence" value="ECO:0007669"/>
    <property type="project" value="UniProtKB-SubCell"/>
</dbReference>
<dbReference type="GO" id="GO:0004057">
    <property type="term" value="F:arginyl-tRNA--protein transferase activity"/>
    <property type="evidence" value="ECO:0007669"/>
    <property type="project" value="InterPro"/>
</dbReference>
<dbReference type="GO" id="GO:0008914">
    <property type="term" value="F:leucyl-tRNA--protein transferase activity"/>
    <property type="evidence" value="ECO:0007669"/>
    <property type="project" value="UniProtKB-UniRule"/>
</dbReference>
<dbReference type="GO" id="GO:0071596">
    <property type="term" value="P:ubiquitin-dependent protein catabolic process via the N-end rule pathway"/>
    <property type="evidence" value="ECO:0007669"/>
    <property type="project" value="InterPro"/>
</dbReference>
<dbReference type="HAMAP" id="MF_00689">
    <property type="entry name" value="Bpt"/>
    <property type="match status" value="1"/>
</dbReference>
<dbReference type="InterPro" id="IPR016181">
    <property type="entry name" value="Acyl_CoA_acyltransferase"/>
</dbReference>
<dbReference type="InterPro" id="IPR017138">
    <property type="entry name" value="Asp_Glu_LeuTrfase"/>
</dbReference>
<dbReference type="InterPro" id="IPR030700">
    <property type="entry name" value="N-end_Aminoacyl_Trfase"/>
</dbReference>
<dbReference type="InterPro" id="IPR007472">
    <property type="entry name" value="N-end_Aminoacyl_Trfase_C"/>
</dbReference>
<dbReference type="InterPro" id="IPR007471">
    <property type="entry name" value="N-end_Aminoacyl_Trfase_N"/>
</dbReference>
<dbReference type="NCBIfam" id="NF002341">
    <property type="entry name" value="PRK01305.1-1"/>
    <property type="match status" value="1"/>
</dbReference>
<dbReference type="NCBIfam" id="NF002342">
    <property type="entry name" value="PRK01305.1-3"/>
    <property type="match status" value="1"/>
</dbReference>
<dbReference type="NCBIfam" id="NF002343">
    <property type="entry name" value="PRK01305.1-4"/>
    <property type="match status" value="1"/>
</dbReference>
<dbReference type="NCBIfam" id="NF002346">
    <property type="entry name" value="PRK01305.2-3"/>
    <property type="match status" value="1"/>
</dbReference>
<dbReference type="PANTHER" id="PTHR21367">
    <property type="entry name" value="ARGININE-TRNA-PROTEIN TRANSFERASE 1"/>
    <property type="match status" value="1"/>
</dbReference>
<dbReference type="PANTHER" id="PTHR21367:SF1">
    <property type="entry name" value="ARGINYL-TRNA--PROTEIN TRANSFERASE 1"/>
    <property type="match status" value="1"/>
</dbReference>
<dbReference type="Pfam" id="PF04377">
    <property type="entry name" value="ATE_C"/>
    <property type="match status" value="1"/>
</dbReference>
<dbReference type="Pfam" id="PF04376">
    <property type="entry name" value="ATE_N"/>
    <property type="match status" value="1"/>
</dbReference>
<dbReference type="PIRSF" id="PIRSF037208">
    <property type="entry name" value="ATE_pro_prd"/>
    <property type="match status" value="1"/>
</dbReference>
<dbReference type="SUPFAM" id="SSF55729">
    <property type="entry name" value="Acyl-CoA N-acyltransferases (Nat)"/>
    <property type="match status" value="1"/>
</dbReference>
<protein>
    <recommendedName>
        <fullName evidence="1">Aspartate/glutamate leucyltransferase</fullName>
        <ecNumber evidence="1">2.3.2.29</ecNumber>
    </recommendedName>
</protein>
<accession>Q3J340</accession>
<gene>
    <name evidence="1" type="primary">bpt</name>
    <name type="ordered locus">RHOS4_12260</name>
    <name type="ordered locus">RSP_2639</name>
</gene>
<proteinExistence type="inferred from homology"/>
<evidence type="ECO:0000255" key="1">
    <source>
        <dbReference type="HAMAP-Rule" id="MF_00689"/>
    </source>
</evidence>
<reference key="1">
    <citation type="submission" date="2005-09" db="EMBL/GenBank/DDBJ databases">
        <title>Complete sequence of chromosome 1 of Rhodobacter sphaeroides 2.4.1.</title>
        <authorList>
            <person name="Copeland A."/>
            <person name="Lucas S."/>
            <person name="Lapidus A."/>
            <person name="Barry K."/>
            <person name="Detter J.C."/>
            <person name="Glavina T."/>
            <person name="Hammon N."/>
            <person name="Israni S."/>
            <person name="Pitluck S."/>
            <person name="Richardson P."/>
            <person name="Mackenzie C."/>
            <person name="Choudhary M."/>
            <person name="Larimer F."/>
            <person name="Hauser L.J."/>
            <person name="Land M."/>
            <person name="Donohue T.J."/>
            <person name="Kaplan S."/>
        </authorList>
    </citation>
    <scope>NUCLEOTIDE SEQUENCE [LARGE SCALE GENOMIC DNA]</scope>
    <source>
        <strain>ATCC 17023 / DSM 158 / JCM 6121 / CCUG 31486 / LMG 2827 / NBRC 12203 / NCIMB 8253 / ATH 2.4.1.</strain>
    </source>
</reference>
<name>BPT_CERS4</name>
<keyword id="KW-0012">Acyltransferase</keyword>
<keyword id="KW-0963">Cytoplasm</keyword>
<keyword id="KW-1185">Reference proteome</keyword>
<keyword id="KW-0808">Transferase</keyword>
<organism>
    <name type="scientific">Cereibacter sphaeroides (strain ATCC 17023 / DSM 158 / JCM 6121 / CCUG 31486 / LMG 2827 / NBRC 12203 / NCIMB 8253 / ATH 2.4.1.)</name>
    <name type="common">Rhodobacter sphaeroides</name>
    <dbReference type="NCBI Taxonomy" id="272943"/>
    <lineage>
        <taxon>Bacteria</taxon>
        <taxon>Pseudomonadati</taxon>
        <taxon>Pseudomonadota</taxon>
        <taxon>Alphaproteobacteria</taxon>
        <taxon>Rhodobacterales</taxon>
        <taxon>Paracoccaceae</taxon>
        <taxon>Cereibacter</taxon>
    </lineage>
</organism>
<comment type="function">
    <text evidence="1">Functions in the N-end rule pathway of protein degradation where it conjugates Leu from its aminoacyl-tRNA to the N-termini of proteins containing an N-terminal aspartate or glutamate.</text>
</comment>
<comment type="catalytic activity">
    <reaction evidence="1">
        <text>N-terminal L-glutamyl-[protein] + L-leucyl-tRNA(Leu) = N-terminal L-leucyl-L-glutamyl-[protein] + tRNA(Leu) + H(+)</text>
        <dbReference type="Rhea" id="RHEA:50412"/>
        <dbReference type="Rhea" id="RHEA-COMP:9613"/>
        <dbReference type="Rhea" id="RHEA-COMP:9622"/>
        <dbReference type="Rhea" id="RHEA-COMP:12664"/>
        <dbReference type="Rhea" id="RHEA-COMP:12668"/>
        <dbReference type="ChEBI" id="CHEBI:15378"/>
        <dbReference type="ChEBI" id="CHEBI:64721"/>
        <dbReference type="ChEBI" id="CHEBI:78442"/>
        <dbReference type="ChEBI" id="CHEBI:78494"/>
        <dbReference type="ChEBI" id="CHEBI:133041"/>
        <dbReference type="EC" id="2.3.2.29"/>
    </reaction>
</comment>
<comment type="catalytic activity">
    <reaction evidence="1">
        <text>N-terminal L-aspartyl-[protein] + L-leucyl-tRNA(Leu) = N-terminal L-leucyl-L-aspartyl-[protein] + tRNA(Leu) + H(+)</text>
        <dbReference type="Rhea" id="RHEA:50420"/>
        <dbReference type="Rhea" id="RHEA-COMP:9613"/>
        <dbReference type="Rhea" id="RHEA-COMP:9622"/>
        <dbReference type="Rhea" id="RHEA-COMP:12669"/>
        <dbReference type="Rhea" id="RHEA-COMP:12674"/>
        <dbReference type="ChEBI" id="CHEBI:15378"/>
        <dbReference type="ChEBI" id="CHEBI:64720"/>
        <dbReference type="ChEBI" id="CHEBI:78442"/>
        <dbReference type="ChEBI" id="CHEBI:78494"/>
        <dbReference type="ChEBI" id="CHEBI:133042"/>
        <dbReference type="EC" id="2.3.2.29"/>
    </reaction>
</comment>
<comment type="subcellular location">
    <subcellularLocation>
        <location evidence="1">Cytoplasm</location>
    </subcellularLocation>
</comment>
<comment type="similarity">
    <text evidence="1">Belongs to the R-transferase family. Bpt subfamily.</text>
</comment>